<reference key="1">
    <citation type="journal article" date="2006" name="Theor. Appl. Genet.">
        <title>Complete chloroplast genome sequences of Solanum bulbocastanum, Solanum lycopersicum and comparative analyses with other Solanaceae genomes.</title>
        <authorList>
            <person name="Daniell H."/>
            <person name="Lee S.-B."/>
            <person name="Grevich J."/>
            <person name="Saski C."/>
            <person name="Quesada-Vargas T."/>
            <person name="Guda C."/>
            <person name="Tomkins J."/>
            <person name="Jansen R.K."/>
        </authorList>
    </citation>
    <scope>NUCLEOTIDE SEQUENCE [LARGE SCALE GENOMIC DNA]</scope>
    <source>
        <strain>cv. LA3023</strain>
    </source>
</reference>
<reference key="2">
    <citation type="journal article" date="2006" name="J. Mol. Evol.">
        <title>Sequence of the tomato chloroplast DNA and evolutionary comparison of solanaceous plastid genomes.</title>
        <authorList>
            <person name="Kahlau S."/>
            <person name="Aspinall S."/>
            <person name="Gray J.C."/>
            <person name="Bock R."/>
        </authorList>
    </citation>
    <scope>NUCLEOTIDE SEQUENCE [LARGE SCALE GENOMIC DNA]</scope>
    <source>
        <strain>cv. IPA-6</strain>
    </source>
</reference>
<geneLocation type="chloroplast"/>
<protein>
    <recommendedName>
        <fullName evidence="1">ATP synthase subunit beta, chloroplastic</fullName>
        <ecNumber evidence="1">7.1.2.2</ecNumber>
    </recommendedName>
    <alternativeName>
        <fullName evidence="1">ATP synthase F1 sector subunit beta</fullName>
    </alternativeName>
    <alternativeName>
        <fullName evidence="1">F-ATPase subunit beta</fullName>
    </alternativeName>
</protein>
<sequence length="498" mass="53467">MRINPTTSGSGVSTLEKKNPGRVVQIIGPVLDVAFPPGKMPNIYNALVVQGRDSVGQPINVACEVQQLLGNNRVRAVAMSATEGLTRGMAVIDTGAPISVPVGGATLGRIFNVLGEPVDNLGPVDTSTTSPIHRSAPAFIQLDTKLSIFETGIKVVDLLAPYRRGGKIGLFGGAGVGKTVLIMELINNIAKAHGGVSVFGGVGERTREGNDLYMEMKESGVINKENIAESKVALVYGQMNEPPGARMRVGLTALTMAEYFRDVNEQDVLLFIDNIFRFVQAGSEVSALLGRMPSAVGYQPTLSTEMGSLQERITSTKEGSITSIQAVYVPADDLTDPAPATTFAHLDATTVLSRGLAAKGIYPAVDPLDSTSTMLQPRIVGEEHYETAQRVKQTLQRYKELQDIIAILGLDELSEEDRLLVARARKIERFLSQPFFVAEVFTGSPGKYVGLAETIRGFQLILSGELDGLPEQAFYLVGTIDEATAKAMNLEMESNLKK</sequence>
<comment type="function">
    <text evidence="1">Produces ATP from ADP in the presence of a proton gradient across the membrane. The catalytic sites are hosted primarily by the beta subunits.</text>
</comment>
<comment type="catalytic activity">
    <reaction evidence="1">
        <text>ATP + H2O + 4 H(+)(in) = ADP + phosphate + 5 H(+)(out)</text>
        <dbReference type="Rhea" id="RHEA:57720"/>
        <dbReference type="ChEBI" id="CHEBI:15377"/>
        <dbReference type="ChEBI" id="CHEBI:15378"/>
        <dbReference type="ChEBI" id="CHEBI:30616"/>
        <dbReference type="ChEBI" id="CHEBI:43474"/>
        <dbReference type="ChEBI" id="CHEBI:456216"/>
        <dbReference type="EC" id="7.1.2.2"/>
    </reaction>
</comment>
<comment type="subunit">
    <text evidence="1">F-type ATPases have 2 components, CF(1) - the catalytic core - and CF(0) - the membrane proton channel. CF(1) has five subunits: alpha(3), beta(3), gamma(1), delta(1), epsilon(1). CF(0) has four main subunits: a(1), b(1), b'(1) and c(9-12).</text>
</comment>
<comment type="subcellular location">
    <subcellularLocation>
        <location evidence="1">Plastid</location>
        <location evidence="1">Chloroplast thylakoid membrane</location>
        <topology evidence="1">Peripheral membrane protein</topology>
    </subcellularLocation>
</comment>
<comment type="similarity">
    <text evidence="1">Belongs to the ATPase alpha/beta chains family.</text>
</comment>
<feature type="chain" id="PRO_0000254525" description="ATP synthase subunit beta, chloroplastic">
    <location>
        <begin position="1"/>
        <end position="498"/>
    </location>
</feature>
<feature type="binding site" evidence="1">
    <location>
        <begin position="172"/>
        <end position="179"/>
    </location>
    <ligand>
        <name>ATP</name>
        <dbReference type="ChEBI" id="CHEBI:30616"/>
    </ligand>
</feature>
<organism>
    <name type="scientific">Solanum lycopersicum</name>
    <name type="common">Tomato</name>
    <name type="synonym">Lycopersicon esculentum</name>
    <dbReference type="NCBI Taxonomy" id="4081"/>
    <lineage>
        <taxon>Eukaryota</taxon>
        <taxon>Viridiplantae</taxon>
        <taxon>Streptophyta</taxon>
        <taxon>Embryophyta</taxon>
        <taxon>Tracheophyta</taxon>
        <taxon>Spermatophyta</taxon>
        <taxon>Magnoliopsida</taxon>
        <taxon>eudicotyledons</taxon>
        <taxon>Gunneridae</taxon>
        <taxon>Pentapetalae</taxon>
        <taxon>asterids</taxon>
        <taxon>lamiids</taxon>
        <taxon>Solanales</taxon>
        <taxon>Solanaceae</taxon>
        <taxon>Solanoideae</taxon>
        <taxon>Solaneae</taxon>
        <taxon>Solanum</taxon>
        <taxon>Solanum subgen. Lycopersicon</taxon>
    </lineage>
</organism>
<name>ATPB_SOLLC</name>
<dbReference type="EC" id="7.1.2.2" evidence="1"/>
<dbReference type="EMBL" id="DQ347959">
    <property type="protein sequence ID" value="ABC56307.1"/>
    <property type="molecule type" value="Genomic_DNA"/>
</dbReference>
<dbReference type="EMBL" id="AM087200">
    <property type="protein sequence ID" value="CAJ32400.1"/>
    <property type="molecule type" value="Genomic_DNA"/>
</dbReference>
<dbReference type="RefSeq" id="AP_004935.1">
    <property type="nucleotide sequence ID" value="AC_000188.1"/>
</dbReference>
<dbReference type="RefSeq" id="XP_010315544.1">
    <property type="nucleotide sequence ID" value="XM_010317242.2"/>
</dbReference>
<dbReference type="RefSeq" id="YP_008563095.1">
    <property type="nucleotide sequence ID" value="NC_007898.3"/>
</dbReference>
<dbReference type="SMR" id="Q2MI93"/>
<dbReference type="FunCoup" id="Q2MI93">
    <property type="interactions" value="340"/>
</dbReference>
<dbReference type="STRING" id="4081.Q2MI93"/>
<dbReference type="PaxDb" id="4081-Solyc01g007320.2.1"/>
<dbReference type="GeneID" id="3950387"/>
<dbReference type="KEGG" id="sly:3950387"/>
<dbReference type="eggNOG" id="KOG1350">
    <property type="taxonomic scope" value="Eukaryota"/>
</dbReference>
<dbReference type="eggNOG" id="KOG1758">
    <property type="taxonomic scope" value="Eukaryota"/>
</dbReference>
<dbReference type="InParanoid" id="Q2MI93"/>
<dbReference type="OrthoDB" id="1257362at2759"/>
<dbReference type="Proteomes" id="UP000004994">
    <property type="component" value="Chloroplast"/>
</dbReference>
<dbReference type="ExpressionAtlas" id="Q2MI93">
    <property type="expression patterns" value="baseline and differential"/>
</dbReference>
<dbReference type="GO" id="GO:0009535">
    <property type="term" value="C:chloroplast thylakoid membrane"/>
    <property type="evidence" value="ECO:0007669"/>
    <property type="project" value="UniProtKB-SubCell"/>
</dbReference>
<dbReference type="GO" id="GO:0005739">
    <property type="term" value="C:mitochondrion"/>
    <property type="evidence" value="ECO:0007669"/>
    <property type="project" value="GOC"/>
</dbReference>
<dbReference type="GO" id="GO:0045259">
    <property type="term" value="C:proton-transporting ATP synthase complex"/>
    <property type="evidence" value="ECO:0007669"/>
    <property type="project" value="UniProtKB-KW"/>
</dbReference>
<dbReference type="GO" id="GO:0005524">
    <property type="term" value="F:ATP binding"/>
    <property type="evidence" value="ECO:0007669"/>
    <property type="project" value="UniProtKB-UniRule"/>
</dbReference>
<dbReference type="GO" id="GO:0016887">
    <property type="term" value="F:ATP hydrolysis activity"/>
    <property type="evidence" value="ECO:0007669"/>
    <property type="project" value="InterPro"/>
</dbReference>
<dbReference type="GO" id="GO:0046933">
    <property type="term" value="F:proton-transporting ATP synthase activity, rotational mechanism"/>
    <property type="evidence" value="ECO:0007669"/>
    <property type="project" value="UniProtKB-UniRule"/>
</dbReference>
<dbReference type="GO" id="GO:0042776">
    <property type="term" value="P:proton motive force-driven mitochondrial ATP synthesis"/>
    <property type="evidence" value="ECO:0000318"/>
    <property type="project" value="GO_Central"/>
</dbReference>
<dbReference type="CDD" id="cd18110">
    <property type="entry name" value="ATP-synt_F1_beta_C"/>
    <property type="match status" value="1"/>
</dbReference>
<dbReference type="CDD" id="cd18115">
    <property type="entry name" value="ATP-synt_F1_beta_N"/>
    <property type="match status" value="1"/>
</dbReference>
<dbReference type="CDD" id="cd01133">
    <property type="entry name" value="F1-ATPase_beta_CD"/>
    <property type="match status" value="1"/>
</dbReference>
<dbReference type="FunFam" id="1.10.1140.10:FF:000001">
    <property type="entry name" value="ATP synthase subunit beta"/>
    <property type="match status" value="1"/>
</dbReference>
<dbReference type="FunFam" id="3.40.50.300:FF:000004">
    <property type="entry name" value="ATP synthase subunit beta"/>
    <property type="match status" value="1"/>
</dbReference>
<dbReference type="FunFam" id="2.40.10.170:FF:000002">
    <property type="entry name" value="ATP synthase subunit beta, chloroplastic"/>
    <property type="match status" value="1"/>
</dbReference>
<dbReference type="Gene3D" id="2.40.10.170">
    <property type="match status" value="1"/>
</dbReference>
<dbReference type="Gene3D" id="1.10.1140.10">
    <property type="entry name" value="Bovine Mitochondrial F1-atpase, Atp Synthase Beta Chain, Chain D, domain 3"/>
    <property type="match status" value="1"/>
</dbReference>
<dbReference type="Gene3D" id="3.40.50.300">
    <property type="entry name" value="P-loop containing nucleotide triphosphate hydrolases"/>
    <property type="match status" value="1"/>
</dbReference>
<dbReference type="HAMAP" id="MF_01347">
    <property type="entry name" value="ATP_synth_beta_bact"/>
    <property type="match status" value="1"/>
</dbReference>
<dbReference type="InterPro" id="IPR003593">
    <property type="entry name" value="AAA+_ATPase"/>
</dbReference>
<dbReference type="InterPro" id="IPR055190">
    <property type="entry name" value="ATP-synt_VA_C"/>
</dbReference>
<dbReference type="InterPro" id="IPR005722">
    <property type="entry name" value="ATP_synth_F1_bsu"/>
</dbReference>
<dbReference type="InterPro" id="IPR020003">
    <property type="entry name" value="ATPase_a/bsu_AS"/>
</dbReference>
<dbReference type="InterPro" id="IPR050053">
    <property type="entry name" value="ATPase_alpha/beta_chains"/>
</dbReference>
<dbReference type="InterPro" id="IPR004100">
    <property type="entry name" value="ATPase_F1/V1/A1_a/bsu_N"/>
</dbReference>
<dbReference type="InterPro" id="IPR036121">
    <property type="entry name" value="ATPase_F1/V1/A1_a/bsu_N_sf"/>
</dbReference>
<dbReference type="InterPro" id="IPR000194">
    <property type="entry name" value="ATPase_F1/V1/A1_a/bsu_nucl-bd"/>
</dbReference>
<dbReference type="InterPro" id="IPR024034">
    <property type="entry name" value="ATPase_F1/V1_b/a_C"/>
</dbReference>
<dbReference type="InterPro" id="IPR027417">
    <property type="entry name" value="P-loop_NTPase"/>
</dbReference>
<dbReference type="NCBIfam" id="TIGR01039">
    <property type="entry name" value="atpD"/>
    <property type="match status" value="1"/>
</dbReference>
<dbReference type="PANTHER" id="PTHR15184">
    <property type="entry name" value="ATP SYNTHASE"/>
    <property type="match status" value="1"/>
</dbReference>
<dbReference type="PANTHER" id="PTHR15184:SF71">
    <property type="entry name" value="ATP SYNTHASE SUBUNIT BETA, MITOCHONDRIAL"/>
    <property type="match status" value="1"/>
</dbReference>
<dbReference type="Pfam" id="PF00006">
    <property type="entry name" value="ATP-synt_ab"/>
    <property type="match status" value="1"/>
</dbReference>
<dbReference type="Pfam" id="PF02874">
    <property type="entry name" value="ATP-synt_ab_N"/>
    <property type="match status" value="1"/>
</dbReference>
<dbReference type="Pfam" id="PF22919">
    <property type="entry name" value="ATP-synt_VA_C"/>
    <property type="match status" value="1"/>
</dbReference>
<dbReference type="SMART" id="SM00382">
    <property type="entry name" value="AAA"/>
    <property type="match status" value="1"/>
</dbReference>
<dbReference type="SUPFAM" id="SSF47917">
    <property type="entry name" value="C-terminal domain of alpha and beta subunits of F1 ATP synthase"/>
    <property type="match status" value="1"/>
</dbReference>
<dbReference type="SUPFAM" id="SSF50615">
    <property type="entry name" value="N-terminal domain of alpha and beta subunits of F1 ATP synthase"/>
    <property type="match status" value="1"/>
</dbReference>
<dbReference type="SUPFAM" id="SSF52540">
    <property type="entry name" value="P-loop containing nucleoside triphosphate hydrolases"/>
    <property type="match status" value="1"/>
</dbReference>
<dbReference type="PROSITE" id="PS00152">
    <property type="entry name" value="ATPASE_ALPHA_BETA"/>
    <property type="match status" value="1"/>
</dbReference>
<evidence type="ECO:0000255" key="1">
    <source>
        <dbReference type="HAMAP-Rule" id="MF_01347"/>
    </source>
</evidence>
<keyword id="KW-0066">ATP synthesis</keyword>
<keyword id="KW-0067">ATP-binding</keyword>
<keyword id="KW-0139">CF(1)</keyword>
<keyword id="KW-0150">Chloroplast</keyword>
<keyword id="KW-0375">Hydrogen ion transport</keyword>
<keyword id="KW-0406">Ion transport</keyword>
<keyword id="KW-0472">Membrane</keyword>
<keyword id="KW-0547">Nucleotide-binding</keyword>
<keyword id="KW-0934">Plastid</keyword>
<keyword id="KW-1185">Reference proteome</keyword>
<keyword id="KW-0793">Thylakoid</keyword>
<keyword id="KW-1278">Translocase</keyword>
<keyword id="KW-0813">Transport</keyword>
<proteinExistence type="inferred from homology"/>
<gene>
    <name evidence="1" type="primary">atpB</name>
</gene>
<accession>Q2MI93</accession>